<name>COOS2_METAC</name>
<sequence length="633" mass="69289">MDKERISYHESVQKMYERIKKDNMTNVWDRYEAQGIGGVPDRRCTFCMAGARCDLCSNGPCRSDAAKDKRGVCGITADGMAMRMMLLRNVMGASTYHYHTDQTIRTLRETAKGKTPYSIREPEKLRTFAGRLGIETLGSDSEIALYLCEFVEKDFNRPAYEPSRIVEILAPPERKKRWEELDIFPGGIYGEMMLSTSSCLTNVDGYYASLALKAMRLGIAMAYQSQIVNEYCQDILFGIPKPHTMRVDLGVLDPEYVNVLPNGHEPFLGFAMVQLARKPEWQEKAKAAGAKGLRVIASIETGQEMIQRWEEDDAFYGFTGNWISQEAVLASGSVDLFAADMNCSLPVAPLYAEKYGFKLMPVSELIAFEDITERLNYNPVEAGRQAAKLLNMAVENFKNRKNSGEPVLNLPVKEAVVGFSTESILDALGGTLDPLLDAIKSGAIKGVVGMVSCTTLRDYGQDVHSVAVVKELIKRNILVLSLGCGNGAMQVAGLCSPETREFAGDSLKAVCEALGVPPVLSYGTCTDTGRLADFLGAISAVMGVPIPDLPIAAAAPEYMEQKATIDAIFALALGLYTYVNPVPTVTGAPDLVKLLTEDCREVTGGVLNVEKDAVKAVDGIEQHIMEKRKKLGI</sequence>
<accession>Q8TR73</accession>
<comment type="function">
    <text evidence="1">CODH oxidizes carbon monoxide coupled, via CooF, to the reduction of a hydrogen cation by a hydrogenase (possibly CooH).</text>
</comment>
<comment type="catalytic activity">
    <reaction evidence="1">
        <text>CO + 2 oxidized [2Fe-2S]-[ferredoxin] + H2O = 2 reduced [2Fe-2S]-[ferredoxin] + CO2 + 2 H(+)</text>
        <dbReference type="Rhea" id="RHEA:21040"/>
        <dbReference type="Rhea" id="RHEA-COMP:10000"/>
        <dbReference type="Rhea" id="RHEA-COMP:10001"/>
        <dbReference type="ChEBI" id="CHEBI:15377"/>
        <dbReference type="ChEBI" id="CHEBI:15378"/>
        <dbReference type="ChEBI" id="CHEBI:16526"/>
        <dbReference type="ChEBI" id="CHEBI:17245"/>
        <dbReference type="ChEBI" id="CHEBI:33737"/>
        <dbReference type="ChEBI" id="CHEBI:33738"/>
        <dbReference type="EC" id="1.2.7.4"/>
    </reaction>
</comment>
<comment type="cofactor">
    <cofactor evidence="1">
        <name>[4Fe-4S] cluster</name>
        <dbReference type="ChEBI" id="CHEBI:49883"/>
    </cofactor>
    <text evidence="1">Binds 3 [4Fe-4S] clusters per homodimer.</text>
</comment>
<comment type="cofactor">
    <cofactor evidence="1">
        <name>[Ni-4Fe-5S] cluster</name>
        <dbReference type="ChEBI" id="CHEBI:177874"/>
    </cofactor>
    <text evidence="1">Binds 2 [Ni-4Fe-5S] clusters per homodimer.</text>
</comment>
<comment type="subunit">
    <text evidence="1">Homodimer.</text>
</comment>
<comment type="domain">
    <text evidence="1">Cluster B is an all-cysteinyl-liganded 4Fe-4S cluster; cluster C is a mixed Ni-Fe-S cluster which is the active site of CO oxidation. Cluster D is also an all-cysteinyl-liganded 4Fe-4S cluster that bridges the two subunits of the CODH dimer.</text>
</comment>
<comment type="similarity">
    <text evidence="2">Belongs to the Ni-containing carbon monoxide dehydrogenase family.</text>
</comment>
<comment type="caution">
    <text evidence="2">This protein lacks the conserved Cys in positions 52 and 300; they are replaced by an Arg and a Glu, respectively. It is therefore possible that the C- and D-clusters are either altered or missing in this protein.</text>
</comment>
<protein>
    <recommendedName>
        <fullName>Carbon monoxide dehydrogenase 2</fullName>
        <shortName>CODH 2</shortName>
        <ecNumber evidence="1">1.2.7.4</ecNumber>
    </recommendedName>
</protein>
<keyword id="KW-0004">4Fe-4S</keyword>
<keyword id="KW-0408">Iron</keyword>
<keyword id="KW-0411">Iron-sulfur</keyword>
<keyword id="KW-0479">Metal-binding</keyword>
<keyword id="KW-0533">Nickel</keyword>
<keyword id="KW-0560">Oxidoreductase</keyword>
<keyword id="KW-1185">Reference proteome</keyword>
<gene>
    <name type="primary">cooS2</name>
    <name type="ordered locus">MA_1309</name>
</gene>
<evidence type="ECO:0000250" key="1">
    <source>
        <dbReference type="UniProtKB" id="Q9F8A8"/>
    </source>
</evidence>
<evidence type="ECO:0000305" key="2"/>
<reference key="1">
    <citation type="journal article" date="2002" name="Genome Res.">
        <title>The genome of Methanosarcina acetivorans reveals extensive metabolic and physiological diversity.</title>
        <authorList>
            <person name="Galagan J.E."/>
            <person name="Nusbaum C."/>
            <person name="Roy A."/>
            <person name="Endrizzi M.G."/>
            <person name="Macdonald P."/>
            <person name="FitzHugh W."/>
            <person name="Calvo S."/>
            <person name="Engels R."/>
            <person name="Smirnov S."/>
            <person name="Atnoor D."/>
            <person name="Brown A."/>
            <person name="Allen N."/>
            <person name="Naylor J."/>
            <person name="Stange-Thomann N."/>
            <person name="DeArellano K."/>
            <person name="Johnson R."/>
            <person name="Linton L."/>
            <person name="McEwan P."/>
            <person name="McKernan K."/>
            <person name="Talamas J."/>
            <person name="Tirrell A."/>
            <person name="Ye W."/>
            <person name="Zimmer A."/>
            <person name="Barber R.D."/>
            <person name="Cann I."/>
            <person name="Graham D.E."/>
            <person name="Grahame D.A."/>
            <person name="Guss A.M."/>
            <person name="Hedderich R."/>
            <person name="Ingram-Smith C."/>
            <person name="Kuettner H.C."/>
            <person name="Krzycki J.A."/>
            <person name="Leigh J.A."/>
            <person name="Li W."/>
            <person name="Liu J."/>
            <person name="Mukhopadhyay B."/>
            <person name="Reeve J.N."/>
            <person name="Smith K."/>
            <person name="Springer T.A."/>
            <person name="Umayam L.A."/>
            <person name="White O."/>
            <person name="White R.H."/>
            <person name="de Macario E.C."/>
            <person name="Ferry J.G."/>
            <person name="Jarrell K.F."/>
            <person name="Jing H."/>
            <person name="Macario A.J.L."/>
            <person name="Paulsen I.T."/>
            <person name="Pritchett M."/>
            <person name="Sowers K.R."/>
            <person name="Swanson R.V."/>
            <person name="Zinder S.H."/>
            <person name="Lander E."/>
            <person name="Metcalf W.W."/>
            <person name="Birren B."/>
        </authorList>
    </citation>
    <scope>NUCLEOTIDE SEQUENCE [LARGE SCALE GENOMIC DNA]</scope>
    <source>
        <strain>ATCC 35395 / DSM 2834 / JCM 12185 / C2A</strain>
    </source>
</reference>
<dbReference type="EC" id="1.2.7.4" evidence="1"/>
<dbReference type="EMBL" id="AE010299">
    <property type="protein sequence ID" value="AAM04727.1"/>
    <property type="molecule type" value="Genomic_DNA"/>
</dbReference>
<dbReference type="RefSeq" id="WP_011021329.1">
    <property type="nucleotide sequence ID" value="NC_003552.1"/>
</dbReference>
<dbReference type="SMR" id="Q8TR73"/>
<dbReference type="STRING" id="188937.MA_1309"/>
<dbReference type="EnsemblBacteria" id="AAM04727">
    <property type="protein sequence ID" value="AAM04727"/>
    <property type="gene ID" value="MA_1309"/>
</dbReference>
<dbReference type="GeneID" id="1473197"/>
<dbReference type="KEGG" id="mac:MA_1309"/>
<dbReference type="HOGENOM" id="CLU_030631_0_0_2"/>
<dbReference type="InParanoid" id="Q8TR73"/>
<dbReference type="OrthoDB" id="146433at2157"/>
<dbReference type="PhylomeDB" id="Q8TR73"/>
<dbReference type="Proteomes" id="UP000002487">
    <property type="component" value="Chromosome"/>
</dbReference>
<dbReference type="GO" id="GO:0051539">
    <property type="term" value="F:4 iron, 4 sulfur cluster binding"/>
    <property type="evidence" value="ECO:0007669"/>
    <property type="project" value="UniProtKB-KW"/>
</dbReference>
<dbReference type="GO" id="GO:0043885">
    <property type="term" value="F:anaerobic carbon-monoxide dehydrogenase activity"/>
    <property type="evidence" value="ECO:0007669"/>
    <property type="project" value="UniProtKB-EC"/>
</dbReference>
<dbReference type="GO" id="GO:0050418">
    <property type="term" value="F:hydroxylamine reductase activity"/>
    <property type="evidence" value="ECO:0000318"/>
    <property type="project" value="GO_Central"/>
</dbReference>
<dbReference type="GO" id="GO:0016151">
    <property type="term" value="F:nickel cation binding"/>
    <property type="evidence" value="ECO:0007669"/>
    <property type="project" value="InterPro"/>
</dbReference>
<dbReference type="GO" id="GO:0004601">
    <property type="term" value="F:peroxidase activity"/>
    <property type="evidence" value="ECO:0000318"/>
    <property type="project" value="GO_Central"/>
</dbReference>
<dbReference type="GO" id="GO:0006091">
    <property type="term" value="P:generation of precursor metabolites and energy"/>
    <property type="evidence" value="ECO:0007669"/>
    <property type="project" value="InterPro"/>
</dbReference>
<dbReference type="GO" id="GO:0046210">
    <property type="term" value="P:nitric oxide catabolic process"/>
    <property type="evidence" value="ECO:0000318"/>
    <property type="project" value="GO_Central"/>
</dbReference>
<dbReference type="GO" id="GO:0042542">
    <property type="term" value="P:response to hydrogen peroxide"/>
    <property type="evidence" value="ECO:0000318"/>
    <property type="project" value="GO_Central"/>
</dbReference>
<dbReference type="CDD" id="cd01915">
    <property type="entry name" value="CODH"/>
    <property type="match status" value="1"/>
</dbReference>
<dbReference type="FunFam" id="1.20.1270.30:FF:000001">
    <property type="entry name" value="Carbon monoxide dehydrogenase"/>
    <property type="match status" value="1"/>
</dbReference>
<dbReference type="FunFam" id="3.40.50.2030:FF:000003">
    <property type="entry name" value="Carbon monoxide dehydrogenase"/>
    <property type="match status" value="1"/>
</dbReference>
<dbReference type="Gene3D" id="1.20.1270.30">
    <property type="match status" value="1"/>
</dbReference>
<dbReference type="Gene3D" id="3.40.50.2030">
    <property type="match status" value="2"/>
</dbReference>
<dbReference type="InterPro" id="IPR016101">
    <property type="entry name" value="CO_DH_a-bundle"/>
</dbReference>
<dbReference type="InterPro" id="IPR010047">
    <property type="entry name" value="CODH"/>
</dbReference>
<dbReference type="InterPro" id="IPR004137">
    <property type="entry name" value="HCP/CODH"/>
</dbReference>
<dbReference type="InterPro" id="IPR016099">
    <property type="entry name" value="Prismane-like_a/b-sand"/>
</dbReference>
<dbReference type="InterPro" id="IPR011254">
    <property type="entry name" value="Prismane-like_sf"/>
</dbReference>
<dbReference type="NCBIfam" id="TIGR01702">
    <property type="entry name" value="CO_DH_cata"/>
    <property type="match status" value="1"/>
</dbReference>
<dbReference type="PANTHER" id="PTHR30109:SF4">
    <property type="entry name" value="CARBON MONOXIDE DEHYDROGENASE"/>
    <property type="match status" value="1"/>
</dbReference>
<dbReference type="PANTHER" id="PTHR30109">
    <property type="entry name" value="HYDROXYLAMINE REDUCTASE"/>
    <property type="match status" value="1"/>
</dbReference>
<dbReference type="Pfam" id="PF03063">
    <property type="entry name" value="Prismane"/>
    <property type="match status" value="1"/>
</dbReference>
<dbReference type="PIRSF" id="PIRSF005023">
    <property type="entry name" value="CODH"/>
    <property type="match status" value="1"/>
</dbReference>
<dbReference type="SUPFAM" id="SSF56821">
    <property type="entry name" value="Prismane protein-like"/>
    <property type="match status" value="1"/>
</dbReference>
<proteinExistence type="inferred from homology"/>
<organism>
    <name type="scientific">Methanosarcina acetivorans (strain ATCC 35395 / DSM 2834 / JCM 12185 / C2A)</name>
    <dbReference type="NCBI Taxonomy" id="188937"/>
    <lineage>
        <taxon>Archaea</taxon>
        <taxon>Methanobacteriati</taxon>
        <taxon>Methanobacteriota</taxon>
        <taxon>Stenosarchaea group</taxon>
        <taxon>Methanomicrobia</taxon>
        <taxon>Methanosarcinales</taxon>
        <taxon>Methanosarcinaceae</taxon>
        <taxon>Methanosarcina</taxon>
    </lineage>
</organism>
<feature type="chain" id="PRO_0000157142" description="Carbon monoxide dehydrogenase 2">
    <location>
        <begin position="1"/>
        <end position="633"/>
    </location>
</feature>
<feature type="binding site" evidence="1">
    <location>
        <position position="44"/>
    </location>
    <ligand>
        <name>[4Fe-4S] cluster</name>
        <dbReference type="ChEBI" id="CHEBI:49883"/>
        <label>1</label>
        <note>ligand shared between dimeric partners</note>
    </ligand>
</feature>
<feature type="binding site" evidence="1">
    <location>
        <position position="53"/>
    </location>
    <ligand>
        <name>[4Fe-4S] cluster</name>
        <dbReference type="ChEBI" id="CHEBI:49883"/>
        <label>2</label>
    </ligand>
</feature>
<feature type="binding site" evidence="1">
    <location>
        <position position="56"/>
    </location>
    <ligand>
        <name>[4Fe-4S] cluster</name>
        <dbReference type="ChEBI" id="CHEBI:49883"/>
        <label>2</label>
    </ligand>
</feature>
<feature type="binding site" evidence="1">
    <location>
        <position position="61"/>
    </location>
    <ligand>
        <name>[4Fe-4S] cluster</name>
        <dbReference type="ChEBI" id="CHEBI:49883"/>
        <label>2</label>
    </ligand>
</feature>
<feature type="binding site" evidence="1">
    <location>
        <position position="73"/>
    </location>
    <ligand>
        <name>[4Fe-4S] cluster</name>
        <dbReference type="ChEBI" id="CHEBI:49883"/>
        <label>2</label>
    </ligand>
</feature>
<feature type="binding site" evidence="1">
    <location>
        <position position="264"/>
    </location>
    <ligand>
        <name>[Ni-4Fe-5S] cluster</name>
        <dbReference type="ChEBI" id="CHEBI:177874"/>
    </ligand>
</feature>
<feature type="binding site" evidence="1">
    <location>
        <position position="343"/>
    </location>
    <ligand>
        <name>[Ni-4Fe-5S] cluster</name>
        <dbReference type="ChEBI" id="CHEBI:177874"/>
    </ligand>
</feature>
<feature type="binding site" evidence="1">
    <location>
        <position position="453"/>
    </location>
    <ligand>
        <name>[Ni-4Fe-5S] cluster</name>
        <dbReference type="ChEBI" id="CHEBI:177874"/>
    </ligand>
</feature>
<feature type="binding site" evidence="1">
    <location>
        <position position="484"/>
    </location>
    <ligand>
        <name>[Ni-4Fe-5S] cluster</name>
        <dbReference type="ChEBI" id="CHEBI:177874"/>
    </ligand>
</feature>
<feature type="binding site" evidence="1">
    <location>
        <position position="525"/>
    </location>
    <ligand>
        <name>[Ni-4Fe-5S] cluster</name>
        <dbReference type="ChEBI" id="CHEBI:177874"/>
    </ligand>
</feature>